<keyword id="KW-0025">Alternative splicing</keyword>
<keyword id="KW-0539">Nucleus</keyword>
<keyword id="KW-1185">Reference proteome</keyword>
<comment type="subcellular location">
    <subcellularLocation>
        <location evidence="1">Nucleus</location>
    </subcellularLocation>
</comment>
<comment type="alternative products">
    <event type="alternative splicing"/>
    <isoform>
        <id>Q504N7-1</id>
        <name>1</name>
        <sequence type="displayed"/>
    </isoform>
    <isoform>
        <id>Q504N7-2</id>
        <name>2</name>
        <sequence type="described" ref="VSP_033661 VSP_033662"/>
    </isoform>
</comment>
<comment type="similarity">
    <text evidence="6">Belongs to the HIN-200 family.</text>
</comment>
<evidence type="ECO:0000250" key="1">
    <source>
        <dbReference type="UniProtKB" id="O35368"/>
    </source>
</evidence>
<evidence type="ECO:0000255" key="2">
    <source>
        <dbReference type="PROSITE-ProRule" id="PRU00061"/>
    </source>
</evidence>
<evidence type="ECO:0000255" key="3">
    <source>
        <dbReference type="PROSITE-ProRule" id="PRU00106"/>
    </source>
</evidence>
<evidence type="ECO:0000256" key="4">
    <source>
        <dbReference type="SAM" id="MobiDB-lite"/>
    </source>
</evidence>
<evidence type="ECO:0000303" key="5">
    <source>
    </source>
</evidence>
<evidence type="ECO:0000305" key="6"/>
<evidence type="ECO:0000312" key="7">
    <source>
        <dbReference type="MGI" id="MGI:3584522"/>
    </source>
</evidence>
<sequence>MVNEYKRIVLLTGLMGINDHDFRMVKSLLSKELKLNKMQDEYDRVKIADLMEDKFPKDAGVVQLIKLYKQIPGLGDIANKLKNEKAKAKRKGKGKRKTAAKRQRQEEPSTSQPMSTTNEDAEPESGRSTPDTQVAQLSLPTASRRNQAIQISPTIASSSGQTSSRSSETLQSIIQSPETPTRSSSRILDPPVSLGTAYSSAQALGVLLATPAKRQRLKNVPKEPSEENGYQQGSKKVMVLKVTEPFAYDMKGEKMFHATVATETEFFRVKVFDIVLKEKFIPNKVLTISNYVGCNGFINIYSASSVSEVNDGEPMNIPLSLRKSANRTPKINYLCSKRRGIFVNGVFTVCKKEERGYYICYEIGDDTGMMEVEVYGRLTNIACNPGDKLRLML</sequence>
<gene>
    <name evidence="7" type="primary">Ifi214</name>
</gene>
<protein>
    <recommendedName>
        <fullName evidence="6">Pyrin and HIN domain-containing protein 1-like</fullName>
    </recommendedName>
    <alternativeName>
        <fullName evidence="6">Interferon-inducible protein 214</fullName>
    </alternativeName>
</protein>
<organism>
    <name type="scientific">Mus musculus</name>
    <name type="common">Mouse</name>
    <dbReference type="NCBI Taxonomy" id="10090"/>
    <lineage>
        <taxon>Eukaryota</taxon>
        <taxon>Metazoa</taxon>
        <taxon>Chordata</taxon>
        <taxon>Craniata</taxon>
        <taxon>Vertebrata</taxon>
        <taxon>Euteleostomi</taxon>
        <taxon>Mammalia</taxon>
        <taxon>Eutheria</taxon>
        <taxon>Euarchontoglires</taxon>
        <taxon>Glires</taxon>
        <taxon>Rodentia</taxon>
        <taxon>Myomorpha</taxon>
        <taxon>Muroidea</taxon>
        <taxon>Muridae</taxon>
        <taxon>Murinae</taxon>
        <taxon>Mus</taxon>
        <taxon>Mus</taxon>
    </lineage>
</organism>
<name>IFIXL_MOUSE</name>
<accession>Q504N7</accession>
<accession>Q3U1B4</accession>
<feature type="chain" id="PRO_0000334526" description="Pyrin and HIN domain-containing protein 1-like">
    <location>
        <begin position="1"/>
        <end position="393"/>
    </location>
</feature>
<feature type="domain" description="Pyrin" evidence="2">
    <location>
        <begin position="1"/>
        <end position="87"/>
    </location>
</feature>
<feature type="domain" description="HIN-200" evidence="3">
    <location>
        <begin position="219"/>
        <end position="393"/>
    </location>
</feature>
<feature type="region of interest" description="Disordered" evidence="4">
    <location>
        <begin position="82"/>
        <end position="188"/>
    </location>
</feature>
<feature type="compositionally biased region" description="Basic residues" evidence="4">
    <location>
        <begin position="87"/>
        <end position="102"/>
    </location>
</feature>
<feature type="compositionally biased region" description="Polar residues" evidence="4">
    <location>
        <begin position="108"/>
        <end position="118"/>
    </location>
</feature>
<feature type="compositionally biased region" description="Polar residues" evidence="4">
    <location>
        <begin position="126"/>
        <end position="151"/>
    </location>
</feature>
<feature type="compositionally biased region" description="Low complexity" evidence="4">
    <location>
        <begin position="152"/>
        <end position="169"/>
    </location>
</feature>
<feature type="compositionally biased region" description="Polar residues" evidence="4">
    <location>
        <begin position="170"/>
        <end position="186"/>
    </location>
</feature>
<feature type="splice variant" id="VSP_033661" description="In isoform 2." evidence="5">
    <original>RQRLKN</original>
    <variation>VIKARN</variation>
    <location>
        <begin position="214"/>
        <end position="219"/>
    </location>
</feature>
<feature type="splice variant" id="VSP_033662" description="In isoform 2." evidence="5">
    <location>
        <begin position="220"/>
        <end position="393"/>
    </location>
</feature>
<feature type="sequence conflict" description="In Ref. 1; BAE33585." evidence="6" ref="1">
    <original>L</original>
    <variation>P</variation>
    <location>
        <position position="194"/>
    </location>
</feature>
<dbReference type="EMBL" id="AK156095">
    <property type="protein sequence ID" value="BAE33585.1"/>
    <property type="molecule type" value="mRNA"/>
</dbReference>
<dbReference type="EMBL" id="BC094916">
    <property type="protein sequence ID" value="AAH94916.1"/>
    <property type="molecule type" value="mRNA"/>
</dbReference>
<dbReference type="CCDS" id="CCDS35790.2">
    <molecule id="Q504N7-2"/>
</dbReference>
<dbReference type="RefSeq" id="NP_001019892.2">
    <property type="nucleotide sequence ID" value="NM_001024721.2"/>
</dbReference>
<dbReference type="SMR" id="Q504N7"/>
<dbReference type="FunCoup" id="Q504N7">
    <property type="interactions" value="38"/>
</dbReference>
<dbReference type="iPTMnet" id="Q504N7"/>
<dbReference type="PhosphoSitePlus" id="Q504N7"/>
<dbReference type="jPOST" id="Q504N7"/>
<dbReference type="GeneID" id="545384"/>
<dbReference type="KEGG" id="mmu:545384"/>
<dbReference type="AGR" id="MGI:3584522"/>
<dbReference type="CTD" id="545384"/>
<dbReference type="MGI" id="MGI:3584522">
    <property type="gene designation" value="Ifi214"/>
</dbReference>
<dbReference type="InParanoid" id="Q504N7"/>
<dbReference type="OrthoDB" id="92304at9989"/>
<dbReference type="TreeFam" id="TF337385"/>
<dbReference type="BioGRID-ORCS" id="545384">
    <property type="hits" value="2 hits in 75 CRISPR screens"/>
</dbReference>
<dbReference type="PRO" id="PR:Q504N7"/>
<dbReference type="Proteomes" id="UP000000589">
    <property type="component" value="Unplaced"/>
</dbReference>
<dbReference type="RNAct" id="Q504N7">
    <property type="molecule type" value="protein"/>
</dbReference>
<dbReference type="GO" id="GO:0005634">
    <property type="term" value="C:nucleus"/>
    <property type="evidence" value="ECO:0007669"/>
    <property type="project" value="UniProtKB-SubCell"/>
</dbReference>
<dbReference type="GO" id="GO:0002218">
    <property type="term" value="P:activation of innate immune response"/>
    <property type="evidence" value="ECO:0007669"/>
    <property type="project" value="InterPro"/>
</dbReference>
<dbReference type="GO" id="GO:0035458">
    <property type="term" value="P:cellular response to interferon-beta"/>
    <property type="evidence" value="ECO:0007669"/>
    <property type="project" value="InterPro"/>
</dbReference>
<dbReference type="CDD" id="cd08305">
    <property type="entry name" value="Pyrin"/>
    <property type="match status" value="1"/>
</dbReference>
<dbReference type="FunFam" id="2.40.50.140:FF:000500">
    <property type="entry name" value="Interferon-activable protein 202"/>
    <property type="match status" value="1"/>
</dbReference>
<dbReference type="FunFam" id="1.10.533.10:FF:000011">
    <property type="entry name" value="Myeloid cell nuclear differentiation antigen"/>
    <property type="match status" value="1"/>
</dbReference>
<dbReference type="FunFam" id="2.40.50.140:FF:000101">
    <property type="entry name" value="Myeloid cell nuclear differentiation antigen"/>
    <property type="match status" value="1"/>
</dbReference>
<dbReference type="Gene3D" id="1.10.533.10">
    <property type="entry name" value="Death Domain, Fas"/>
    <property type="match status" value="1"/>
</dbReference>
<dbReference type="Gene3D" id="2.40.50.140">
    <property type="entry name" value="Nucleic acid-binding proteins"/>
    <property type="match status" value="2"/>
</dbReference>
<dbReference type="InterPro" id="IPR004020">
    <property type="entry name" value="DAPIN"/>
</dbReference>
<dbReference type="InterPro" id="IPR011029">
    <property type="entry name" value="DEATH-like_dom_sf"/>
</dbReference>
<dbReference type="InterPro" id="IPR040205">
    <property type="entry name" value="HIN-200"/>
</dbReference>
<dbReference type="InterPro" id="IPR004021">
    <property type="entry name" value="HIN200/IF120x"/>
</dbReference>
<dbReference type="InterPro" id="IPR012340">
    <property type="entry name" value="NA-bd_OB-fold"/>
</dbReference>
<dbReference type="PANTHER" id="PTHR12200:SF28">
    <property type="entry name" value="INTEFERON-ACTIVABLE PROTEIN 208-RELATED"/>
    <property type="match status" value="1"/>
</dbReference>
<dbReference type="PANTHER" id="PTHR12200">
    <property type="entry name" value="INTERFERON-INDUCIBLE PROTEIN AIM2 FAMILY MEMBER"/>
    <property type="match status" value="1"/>
</dbReference>
<dbReference type="Pfam" id="PF02760">
    <property type="entry name" value="HIN"/>
    <property type="match status" value="1"/>
</dbReference>
<dbReference type="Pfam" id="PF02758">
    <property type="entry name" value="PYRIN"/>
    <property type="match status" value="1"/>
</dbReference>
<dbReference type="SMART" id="SM01289">
    <property type="entry name" value="PYRIN"/>
    <property type="match status" value="1"/>
</dbReference>
<dbReference type="SUPFAM" id="SSF159141">
    <property type="entry name" value="HIN-2000 domain-like"/>
    <property type="match status" value="2"/>
</dbReference>
<dbReference type="PROSITE" id="PS50824">
    <property type="entry name" value="DAPIN"/>
    <property type="match status" value="1"/>
</dbReference>
<dbReference type="PROSITE" id="PS50834">
    <property type="entry name" value="HIN_200"/>
    <property type="match status" value="1"/>
</dbReference>
<reference key="1">
    <citation type="journal article" date="2005" name="Science">
        <title>The transcriptional landscape of the mammalian genome.</title>
        <authorList>
            <person name="Carninci P."/>
            <person name="Kasukawa T."/>
            <person name="Katayama S."/>
            <person name="Gough J."/>
            <person name="Frith M.C."/>
            <person name="Maeda N."/>
            <person name="Oyama R."/>
            <person name="Ravasi T."/>
            <person name="Lenhard B."/>
            <person name="Wells C."/>
            <person name="Kodzius R."/>
            <person name="Shimokawa K."/>
            <person name="Bajic V.B."/>
            <person name="Brenner S.E."/>
            <person name="Batalov S."/>
            <person name="Forrest A.R."/>
            <person name="Zavolan M."/>
            <person name="Davis M.J."/>
            <person name="Wilming L.G."/>
            <person name="Aidinis V."/>
            <person name="Allen J.E."/>
            <person name="Ambesi-Impiombato A."/>
            <person name="Apweiler R."/>
            <person name="Aturaliya R.N."/>
            <person name="Bailey T.L."/>
            <person name="Bansal M."/>
            <person name="Baxter L."/>
            <person name="Beisel K.W."/>
            <person name="Bersano T."/>
            <person name="Bono H."/>
            <person name="Chalk A.M."/>
            <person name="Chiu K.P."/>
            <person name="Choudhary V."/>
            <person name="Christoffels A."/>
            <person name="Clutterbuck D.R."/>
            <person name="Crowe M.L."/>
            <person name="Dalla E."/>
            <person name="Dalrymple B.P."/>
            <person name="de Bono B."/>
            <person name="Della Gatta G."/>
            <person name="di Bernardo D."/>
            <person name="Down T."/>
            <person name="Engstrom P."/>
            <person name="Fagiolini M."/>
            <person name="Faulkner G."/>
            <person name="Fletcher C.F."/>
            <person name="Fukushima T."/>
            <person name="Furuno M."/>
            <person name="Futaki S."/>
            <person name="Gariboldi M."/>
            <person name="Georgii-Hemming P."/>
            <person name="Gingeras T.R."/>
            <person name="Gojobori T."/>
            <person name="Green R.E."/>
            <person name="Gustincich S."/>
            <person name="Harbers M."/>
            <person name="Hayashi Y."/>
            <person name="Hensch T.K."/>
            <person name="Hirokawa N."/>
            <person name="Hill D."/>
            <person name="Huminiecki L."/>
            <person name="Iacono M."/>
            <person name="Ikeo K."/>
            <person name="Iwama A."/>
            <person name="Ishikawa T."/>
            <person name="Jakt M."/>
            <person name="Kanapin A."/>
            <person name="Katoh M."/>
            <person name="Kawasawa Y."/>
            <person name="Kelso J."/>
            <person name="Kitamura H."/>
            <person name="Kitano H."/>
            <person name="Kollias G."/>
            <person name="Krishnan S.P."/>
            <person name="Kruger A."/>
            <person name="Kummerfeld S.K."/>
            <person name="Kurochkin I.V."/>
            <person name="Lareau L.F."/>
            <person name="Lazarevic D."/>
            <person name="Lipovich L."/>
            <person name="Liu J."/>
            <person name="Liuni S."/>
            <person name="McWilliam S."/>
            <person name="Madan Babu M."/>
            <person name="Madera M."/>
            <person name="Marchionni L."/>
            <person name="Matsuda H."/>
            <person name="Matsuzawa S."/>
            <person name="Miki H."/>
            <person name="Mignone F."/>
            <person name="Miyake S."/>
            <person name="Morris K."/>
            <person name="Mottagui-Tabar S."/>
            <person name="Mulder N."/>
            <person name="Nakano N."/>
            <person name="Nakauchi H."/>
            <person name="Ng P."/>
            <person name="Nilsson R."/>
            <person name="Nishiguchi S."/>
            <person name="Nishikawa S."/>
            <person name="Nori F."/>
            <person name="Ohara O."/>
            <person name="Okazaki Y."/>
            <person name="Orlando V."/>
            <person name="Pang K.C."/>
            <person name="Pavan W.J."/>
            <person name="Pavesi G."/>
            <person name="Pesole G."/>
            <person name="Petrovsky N."/>
            <person name="Piazza S."/>
            <person name="Reed J."/>
            <person name="Reid J.F."/>
            <person name="Ring B.Z."/>
            <person name="Ringwald M."/>
            <person name="Rost B."/>
            <person name="Ruan Y."/>
            <person name="Salzberg S.L."/>
            <person name="Sandelin A."/>
            <person name="Schneider C."/>
            <person name="Schoenbach C."/>
            <person name="Sekiguchi K."/>
            <person name="Semple C.A."/>
            <person name="Seno S."/>
            <person name="Sessa L."/>
            <person name="Sheng Y."/>
            <person name="Shibata Y."/>
            <person name="Shimada H."/>
            <person name="Shimada K."/>
            <person name="Silva D."/>
            <person name="Sinclair B."/>
            <person name="Sperling S."/>
            <person name="Stupka E."/>
            <person name="Sugiura K."/>
            <person name="Sultana R."/>
            <person name="Takenaka Y."/>
            <person name="Taki K."/>
            <person name="Tammoja K."/>
            <person name="Tan S.L."/>
            <person name="Tang S."/>
            <person name="Taylor M.S."/>
            <person name="Tegner J."/>
            <person name="Teichmann S.A."/>
            <person name="Ueda H.R."/>
            <person name="van Nimwegen E."/>
            <person name="Verardo R."/>
            <person name="Wei C.L."/>
            <person name="Yagi K."/>
            <person name="Yamanishi H."/>
            <person name="Zabarovsky E."/>
            <person name="Zhu S."/>
            <person name="Zimmer A."/>
            <person name="Hide W."/>
            <person name="Bult C."/>
            <person name="Grimmond S.M."/>
            <person name="Teasdale R.D."/>
            <person name="Liu E.T."/>
            <person name="Brusic V."/>
            <person name="Quackenbush J."/>
            <person name="Wahlestedt C."/>
            <person name="Mattick J.S."/>
            <person name="Hume D.A."/>
            <person name="Kai C."/>
            <person name="Sasaki D."/>
            <person name="Tomaru Y."/>
            <person name="Fukuda S."/>
            <person name="Kanamori-Katayama M."/>
            <person name="Suzuki M."/>
            <person name="Aoki J."/>
            <person name="Arakawa T."/>
            <person name="Iida J."/>
            <person name="Imamura K."/>
            <person name="Itoh M."/>
            <person name="Kato T."/>
            <person name="Kawaji H."/>
            <person name="Kawagashira N."/>
            <person name="Kawashima T."/>
            <person name="Kojima M."/>
            <person name="Kondo S."/>
            <person name="Konno H."/>
            <person name="Nakano K."/>
            <person name="Ninomiya N."/>
            <person name="Nishio T."/>
            <person name="Okada M."/>
            <person name="Plessy C."/>
            <person name="Shibata K."/>
            <person name="Shiraki T."/>
            <person name="Suzuki S."/>
            <person name="Tagami M."/>
            <person name="Waki K."/>
            <person name="Watahiki A."/>
            <person name="Okamura-Oho Y."/>
            <person name="Suzuki H."/>
            <person name="Kawai J."/>
            <person name="Hayashizaki Y."/>
        </authorList>
    </citation>
    <scope>NUCLEOTIDE SEQUENCE [LARGE SCALE MRNA] (ISOFORM 2)</scope>
    <source>
        <strain>NOD</strain>
        <tissue>Spleen</tissue>
    </source>
</reference>
<reference key="2">
    <citation type="journal article" date="2004" name="Genome Res.">
        <title>The status, quality, and expansion of the NIH full-length cDNA project: the Mammalian Gene Collection (MGC).</title>
        <authorList>
            <consortium name="The MGC Project Team"/>
        </authorList>
    </citation>
    <scope>NUCLEOTIDE SEQUENCE [LARGE SCALE MRNA] (ISOFORM 1)</scope>
    <source>
        <strain>C57BL/6NCr</strain>
        <tissue>Hematopoietic stem cell</tissue>
    </source>
</reference>
<proteinExistence type="evidence at transcript level"/>